<name>RS20_SERP5</name>
<accession>A8G9L2</accession>
<evidence type="ECO:0000255" key="1">
    <source>
        <dbReference type="HAMAP-Rule" id="MF_00500"/>
    </source>
</evidence>
<evidence type="ECO:0000256" key="2">
    <source>
        <dbReference type="SAM" id="MobiDB-lite"/>
    </source>
</evidence>
<evidence type="ECO:0000305" key="3"/>
<sequence length="86" mass="9456">MANIKSAKKRAVQSEKRRKHNASGRSMMRTYIKKVEAAIATGDKEAAQAAYAVMKPIVDRKAAKGLIHKNKAARHKSNLSARINAL</sequence>
<organism>
    <name type="scientific">Serratia proteamaculans (strain 568)</name>
    <dbReference type="NCBI Taxonomy" id="399741"/>
    <lineage>
        <taxon>Bacteria</taxon>
        <taxon>Pseudomonadati</taxon>
        <taxon>Pseudomonadota</taxon>
        <taxon>Gammaproteobacteria</taxon>
        <taxon>Enterobacterales</taxon>
        <taxon>Yersiniaceae</taxon>
        <taxon>Serratia</taxon>
    </lineage>
</organism>
<dbReference type="EMBL" id="CP000826">
    <property type="protein sequence ID" value="ABV39802.1"/>
    <property type="molecule type" value="Genomic_DNA"/>
</dbReference>
<dbReference type="SMR" id="A8G9L2"/>
<dbReference type="STRING" id="399741.Spro_0696"/>
<dbReference type="KEGG" id="spe:Spro_0696"/>
<dbReference type="eggNOG" id="COG0268">
    <property type="taxonomic scope" value="Bacteria"/>
</dbReference>
<dbReference type="HOGENOM" id="CLU_160655_4_0_6"/>
<dbReference type="OrthoDB" id="9807974at2"/>
<dbReference type="GO" id="GO:0005829">
    <property type="term" value="C:cytosol"/>
    <property type="evidence" value="ECO:0007669"/>
    <property type="project" value="TreeGrafter"/>
</dbReference>
<dbReference type="GO" id="GO:0015935">
    <property type="term" value="C:small ribosomal subunit"/>
    <property type="evidence" value="ECO:0007669"/>
    <property type="project" value="TreeGrafter"/>
</dbReference>
<dbReference type="GO" id="GO:0070181">
    <property type="term" value="F:small ribosomal subunit rRNA binding"/>
    <property type="evidence" value="ECO:0007669"/>
    <property type="project" value="TreeGrafter"/>
</dbReference>
<dbReference type="GO" id="GO:0003735">
    <property type="term" value="F:structural constituent of ribosome"/>
    <property type="evidence" value="ECO:0007669"/>
    <property type="project" value="InterPro"/>
</dbReference>
<dbReference type="GO" id="GO:0006412">
    <property type="term" value="P:translation"/>
    <property type="evidence" value="ECO:0007669"/>
    <property type="project" value="UniProtKB-UniRule"/>
</dbReference>
<dbReference type="FunFam" id="1.20.58.110:FF:000001">
    <property type="entry name" value="30S ribosomal protein S20"/>
    <property type="match status" value="1"/>
</dbReference>
<dbReference type="Gene3D" id="1.20.58.110">
    <property type="entry name" value="Ribosomal protein S20"/>
    <property type="match status" value="1"/>
</dbReference>
<dbReference type="HAMAP" id="MF_00500">
    <property type="entry name" value="Ribosomal_bS20"/>
    <property type="match status" value="1"/>
</dbReference>
<dbReference type="InterPro" id="IPR002583">
    <property type="entry name" value="Ribosomal_bS20"/>
</dbReference>
<dbReference type="InterPro" id="IPR036510">
    <property type="entry name" value="Ribosomal_bS20_sf"/>
</dbReference>
<dbReference type="NCBIfam" id="TIGR00029">
    <property type="entry name" value="S20"/>
    <property type="match status" value="1"/>
</dbReference>
<dbReference type="PANTHER" id="PTHR33398">
    <property type="entry name" value="30S RIBOSOMAL PROTEIN S20"/>
    <property type="match status" value="1"/>
</dbReference>
<dbReference type="PANTHER" id="PTHR33398:SF1">
    <property type="entry name" value="SMALL RIBOSOMAL SUBUNIT PROTEIN BS20C"/>
    <property type="match status" value="1"/>
</dbReference>
<dbReference type="Pfam" id="PF01649">
    <property type="entry name" value="Ribosomal_S20p"/>
    <property type="match status" value="1"/>
</dbReference>
<dbReference type="SUPFAM" id="SSF46992">
    <property type="entry name" value="Ribosomal protein S20"/>
    <property type="match status" value="1"/>
</dbReference>
<proteinExistence type="inferred from homology"/>
<comment type="function">
    <text evidence="1">Binds directly to 16S ribosomal RNA.</text>
</comment>
<comment type="similarity">
    <text evidence="1">Belongs to the bacterial ribosomal protein bS20 family.</text>
</comment>
<gene>
    <name evidence="1" type="primary">rpsT</name>
    <name type="ordered locus">Spro_0696</name>
</gene>
<keyword id="KW-0687">Ribonucleoprotein</keyword>
<keyword id="KW-0689">Ribosomal protein</keyword>
<keyword id="KW-0694">RNA-binding</keyword>
<keyword id="KW-0699">rRNA-binding</keyword>
<reference key="1">
    <citation type="submission" date="2007-09" db="EMBL/GenBank/DDBJ databases">
        <title>Complete sequence of chromosome of Serratia proteamaculans 568.</title>
        <authorList>
            <consortium name="US DOE Joint Genome Institute"/>
            <person name="Copeland A."/>
            <person name="Lucas S."/>
            <person name="Lapidus A."/>
            <person name="Barry K."/>
            <person name="Glavina del Rio T."/>
            <person name="Dalin E."/>
            <person name="Tice H."/>
            <person name="Pitluck S."/>
            <person name="Chain P."/>
            <person name="Malfatti S."/>
            <person name="Shin M."/>
            <person name="Vergez L."/>
            <person name="Schmutz J."/>
            <person name="Larimer F."/>
            <person name="Land M."/>
            <person name="Hauser L."/>
            <person name="Kyrpides N."/>
            <person name="Kim E."/>
            <person name="Taghavi S."/>
            <person name="Newman L."/>
            <person name="Vangronsveld J."/>
            <person name="van der Lelie D."/>
            <person name="Richardson P."/>
        </authorList>
    </citation>
    <scope>NUCLEOTIDE SEQUENCE [LARGE SCALE GENOMIC DNA]</scope>
    <source>
        <strain>568</strain>
    </source>
</reference>
<protein>
    <recommendedName>
        <fullName evidence="1">Small ribosomal subunit protein bS20</fullName>
    </recommendedName>
    <alternativeName>
        <fullName evidence="3">30S ribosomal protein S20</fullName>
    </alternativeName>
</protein>
<feature type="chain" id="PRO_1000060494" description="Small ribosomal subunit protein bS20">
    <location>
        <begin position="1"/>
        <end position="86"/>
    </location>
</feature>
<feature type="region of interest" description="Disordered" evidence="2">
    <location>
        <begin position="1"/>
        <end position="28"/>
    </location>
</feature>
<feature type="compositionally biased region" description="Basic residues" evidence="2">
    <location>
        <begin position="1"/>
        <end position="22"/>
    </location>
</feature>